<organism>
    <name type="scientific">Francisella tularensis subsp. mediasiatica (strain FSC147)</name>
    <dbReference type="NCBI Taxonomy" id="441952"/>
    <lineage>
        <taxon>Bacteria</taxon>
        <taxon>Pseudomonadati</taxon>
        <taxon>Pseudomonadota</taxon>
        <taxon>Gammaproteobacteria</taxon>
        <taxon>Thiotrichales</taxon>
        <taxon>Francisellaceae</taxon>
        <taxon>Francisella</taxon>
    </lineage>
</organism>
<protein>
    <recommendedName>
        <fullName evidence="1">RNA pyrophosphohydrolase</fullName>
        <ecNumber evidence="1">3.6.1.-</ecNumber>
    </recommendedName>
    <alternativeName>
        <fullName evidence="1">(Di)nucleoside polyphosphate hydrolase</fullName>
    </alternativeName>
</protein>
<reference key="1">
    <citation type="journal article" date="2009" name="PLoS Pathog.">
        <title>Molecular evolutionary consequences of niche restriction in Francisella tularensis, a facultative intracellular pathogen.</title>
        <authorList>
            <person name="Larsson P."/>
            <person name="Elfsmark D."/>
            <person name="Svensson K."/>
            <person name="Wikstroem P."/>
            <person name="Forsman M."/>
            <person name="Brettin T."/>
            <person name="Keim P."/>
            <person name="Johansson A."/>
        </authorList>
    </citation>
    <scope>NUCLEOTIDE SEQUENCE [LARGE SCALE GENOMIC DNA]</scope>
    <source>
        <strain>FSC147</strain>
    </source>
</reference>
<gene>
    <name evidence="1" type="primary">rppH</name>
    <name evidence="1" type="synonym">nudH</name>
    <name type="ordered locus">FTM_0224</name>
</gene>
<evidence type="ECO:0000255" key="1">
    <source>
        <dbReference type="HAMAP-Rule" id="MF_00298"/>
    </source>
</evidence>
<sequence>MIDKSGYRANVAIVLLNKQNRVFWGQRRNRTSWQFPQGGVDTGETPLQAMYRELHEEIGLRPQDVEVIASTRDWYKYDIPDSLVRTKEPICIGQKQKWFLLKLKSPESYIDLDANDSPEFDNWRWVSYWYPINHVVYFKQEVYRKALTYFKEYIA</sequence>
<feature type="chain" id="PRO_1000115279" description="RNA pyrophosphohydrolase">
    <location>
        <begin position="1"/>
        <end position="155"/>
    </location>
</feature>
<feature type="domain" description="Nudix hydrolase" evidence="1">
    <location>
        <begin position="6"/>
        <end position="148"/>
    </location>
</feature>
<feature type="short sequence motif" description="Nudix box">
    <location>
        <begin position="38"/>
        <end position="59"/>
    </location>
</feature>
<keyword id="KW-0378">Hydrolase</keyword>
<name>RPPH_FRATM</name>
<accession>B2SFE8</accession>
<comment type="function">
    <text evidence="1">Accelerates the degradation of transcripts by removing pyrophosphate from the 5'-end of triphosphorylated RNA, leading to a more labile monophosphorylated state that can stimulate subsequent ribonuclease cleavage.</text>
</comment>
<comment type="cofactor">
    <cofactor evidence="1">
        <name>a divalent metal cation</name>
        <dbReference type="ChEBI" id="CHEBI:60240"/>
    </cofactor>
</comment>
<comment type="similarity">
    <text evidence="1">Belongs to the Nudix hydrolase family. RppH subfamily.</text>
</comment>
<dbReference type="EC" id="3.6.1.-" evidence="1"/>
<dbReference type="EMBL" id="CP000915">
    <property type="protein sequence ID" value="ACD30301.1"/>
    <property type="molecule type" value="Genomic_DNA"/>
</dbReference>
<dbReference type="SMR" id="B2SFE8"/>
<dbReference type="KEGG" id="ftm:FTM_0224"/>
<dbReference type="HOGENOM" id="CLU_087195_3_1_6"/>
<dbReference type="GO" id="GO:0034432">
    <property type="term" value="F:bis(5'-adenosyl)-pentaphosphatase activity"/>
    <property type="evidence" value="ECO:0007669"/>
    <property type="project" value="TreeGrafter"/>
</dbReference>
<dbReference type="GO" id="GO:0008893">
    <property type="term" value="F:guanosine-3',5'-bis(diphosphate) 3'-diphosphatase activity"/>
    <property type="evidence" value="ECO:0007669"/>
    <property type="project" value="TreeGrafter"/>
</dbReference>
<dbReference type="GO" id="GO:0006753">
    <property type="term" value="P:nucleoside phosphate metabolic process"/>
    <property type="evidence" value="ECO:0007669"/>
    <property type="project" value="TreeGrafter"/>
</dbReference>
<dbReference type="GO" id="GO:0019693">
    <property type="term" value="P:ribose phosphate metabolic process"/>
    <property type="evidence" value="ECO:0007669"/>
    <property type="project" value="TreeGrafter"/>
</dbReference>
<dbReference type="CDD" id="cd03671">
    <property type="entry name" value="NUDIX_Ap4A_hydrolase_plant_like"/>
    <property type="match status" value="1"/>
</dbReference>
<dbReference type="Gene3D" id="3.90.79.10">
    <property type="entry name" value="Nucleoside Triphosphate Pyrophosphohydrolase"/>
    <property type="match status" value="1"/>
</dbReference>
<dbReference type="HAMAP" id="MF_00298">
    <property type="entry name" value="Nudix_RppH"/>
    <property type="match status" value="1"/>
</dbReference>
<dbReference type="InterPro" id="IPR020476">
    <property type="entry name" value="Nudix_hydrolase"/>
</dbReference>
<dbReference type="InterPro" id="IPR015797">
    <property type="entry name" value="NUDIX_hydrolase-like_dom_sf"/>
</dbReference>
<dbReference type="InterPro" id="IPR020084">
    <property type="entry name" value="NUDIX_hydrolase_CS"/>
</dbReference>
<dbReference type="InterPro" id="IPR000086">
    <property type="entry name" value="NUDIX_hydrolase_dom"/>
</dbReference>
<dbReference type="InterPro" id="IPR022927">
    <property type="entry name" value="RppH"/>
</dbReference>
<dbReference type="NCBIfam" id="NF001936">
    <property type="entry name" value="PRK00714.1-3"/>
    <property type="match status" value="1"/>
</dbReference>
<dbReference type="NCBIfam" id="NF001937">
    <property type="entry name" value="PRK00714.1-4"/>
    <property type="match status" value="1"/>
</dbReference>
<dbReference type="NCBIfam" id="NF001938">
    <property type="entry name" value="PRK00714.1-5"/>
    <property type="match status" value="1"/>
</dbReference>
<dbReference type="PANTHER" id="PTHR11839:SF22">
    <property type="entry name" value="NUDIX HYDROLASE 26, CHLOROPLASTIC"/>
    <property type="match status" value="1"/>
</dbReference>
<dbReference type="PANTHER" id="PTHR11839">
    <property type="entry name" value="UDP/ADP-SUGAR PYROPHOSPHATASE"/>
    <property type="match status" value="1"/>
</dbReference>
<dbReference type="Pfam" id="PF00293">
    <property type="entry name" value="NUDIX"/>
    <property type="match status" value="1"/>
</dbReference>
<dbReference type="PRINTS" id="PR00502">
    <property type="entry name" value="NUDIXFAMILY"/>
</dbReference>
<dbReference type="SUPFAM" id="SSF55811">
    <property type="entry name" value="Nudix"/>
    <property type="match status" value="1"/>
</dbReference>
<dbReference type="PROSITE" id="PS51462">
    <property type="entry name" value="NUDIX"/>
    <property type="match status" value="1"/>
</dbReference>
<dbReference type="PROSITE" id="PS00893">
    <property type="entry name" value="NUDIX_BOX"/>
    <property type="match status" value="1"/>
</dbReference>
<proteinExistence type="inferred from homology"/>